<dbReference type="EC" id="3.1.26.11" evidence="1"/>
<dbReference type="EMBL" id="CP000855">
    <property type="protein sequence ID" value="ACJ15737.1"/>
    <property type="molecule type" value="Genomic_DNA"/>
</dbReference>
<dbReference type="RefSeq" id="WP_012571210.1">
    <property type="nucleotide sequence ID" value="NC_011529.1"/>
</dbReference>
<dbReference type="SMR" id="B6YT50"/>
<dbReference type="STRING" id="523850.TON_0252"/>
<dbReference type="GeneID" id="7017914"/>
<dbReference type="KEGG" id="ton:TON_0252"/>
<dbReference type="PATRIC" id="fig|523850.10.peg.254"/>
<dbReference type="eggNOG" id="arCOG00501">
    <property type="taxonomic scope" value="Archaea"/>
</dbReference>
<dbReference type="HOGENOM" id="CLU_031317_2_1_2"/>
<dbReference type="OrthoDB" id="85118at2157"/>
<dbReference type="Proteomes" id="UP000002727">
    <property type="component" value="Chromosome"/>
</dbReference>
<dbReference type="GO" id="GO:0042781">
    <property type="term" value="F:3'-tRNA processing endoribonuclease activity"/>
    <property type="evidence" value="ECO:0007669"/>
    <property type="project" value="UniProtKB-UniRule"/>
</dbReference>
<dbReference type="GO" id="GO:0008270">
    <property type="term" value="F:zinc ion binding"/>
    <property type="evidence" value="ECO:0007669"/>
    <property type="project" value="UniProtKB-UniRule"/>
</dbReference>
<dbReference type="CDD" id="cd07717">
    <property type="entry name" value="RNaseZ_ZiPD-like_MBL-fold"/>
    <property type="match status" value="1"/>
</dbReference>
<dbReference type="Gene3D" id="3.60.15.10">
    <property type="entry name" value="Ribonuclease Z/Hydroxyacylglutathione hydrolase-like"/>
    <property type="match status" value="1"/>
</dbReference>
<dbReference type="HAMAP" id="MF_01818">
    <property type="entry name" value="RNase_Z_BN"/>
    <property type="match status" value="1"/>
</dbReference>
<dbReference type="InterPro" id="IPR001279">
    <property type="entry name" value="Metallo-B-lactamas"/>
</dbReference>
<dbReference type="InterPro" id="IPR036866">
    <property type="entry name" value="RibonucZ/Hydroxyglut_hydro"/>
</dbReference>
<dbReference type="InterPro" id="IPR013471">
    <property type="entry name" value="RNase_Z/BN"/>
</dbReference>
<dbReference type="NCBIfam" id="NF000801">
    <property type="entry name" value="PRK00055.1-3"/>
    <property type="match status" value="1"/>
</dbReference>
<dbReference type="NCBIfam" id="TIGR02651">
    <property type="entry name" value="RNase_Z"/>
    <property type="match status" value="1"/>
</dbReference>
<dbReference type="PANTHER" id="PTHR46018">
    <property type="entry name" value="ZINC PHOSPHODIESTERASE ELAC PROTEIN 1"/>
    <property type="match status" value="1"/>
</dbReference>
<dbReference type="PANTHER" id="PTHR46018:SF2">
    <property type="entry name" value="ZINC PHOSPHODIESTERASE ELAC PROTEIN 1"/>
    <property type="match status" value="1"/>
</dbReference>
<dbReference type="Pfam" id="PF00753">
    <property type="entry name" value="Lactamase_B"/>
    <property type="match status" value="1"/>
</dbReference>
<dbReference type="Pfam" id="PF12706">
    <property type="entry name" value="Lactamase_B_2"/>
    <property type="match status" value="1"/>
</dbReference>
<dbReference type="SMART" id="SM00849">
    <property type="entry name" value="Lactamase_B"/>
    <property type="match status" value="1"/>
</dbReference>
<dbReference type="SUPFAM" id="SSF56281">
    <property type="entry name" value="Metallo-hydrolase/oxidoreductase"/>
    <property type="match status" value="1"/>
</dbReference>
<sequence>MLEVIFLGTGGIMPNRERNVPAIALRYKGEIILFDVGEGTMRQMSTAKLSPMKVEKIFITHFHGDHYLGLAALIQTMNLWNREKPLHIYGPKYTFRFIQNFLNSGFFRPGFDIHVHEIGEVRLKFGDYEIWSFKVEHGIPALGYVFKEKDKRGKFLPEKLAEYGLSEGPILGKLEKQGQIEWNGRIIRLEDVTGPRRKGVKVVYTGDTEPCERTRLFAENADLLIHEATYLRPEDRGDSYHTTVGEACEIAKKAKVKLLALFHRAFRYTYDEYMAKARELCDVPFVIPKDFDVLTFKSGRWEMRNLLEDWQ</sequence>
<reference key="1">
    <citation type="journal article" date="2008" name="J. Bacteriol.">
        <title>The complete genome sequence of Thermococcus onnurineus NA1 reveals a mixed heterotrophic and carboxydotrophic metabolism.</title>
        <authorList>
            <person name="Lee H.S."/>
            <person name="Kang S.G."/>
            <person name="Bae S.S."/>
            <person name="Lim J.K."/>
            <person name="Cho Y."/>
            <person name="Kim Y.J."/>
            <person name="Jeon J.H."/>
            <person name="Cha S.-S."/>
            <person name="Kwon K.K."/>
            <person name="Kim H.-T."/>
            <person name="Park C.-J."/>
            <person name="Lee H.-W."/>
            <person name="Kim S.I."/>
            <person name="Chun J."/>
            <person name="Colwell R.R."/>
            <person name="Kim S.-J."/>
            <person name="Lee J.-H."/>
        </authorList>
    </citation>
    <scope>NUCLEOTIDE SEQUENCE [LARGE SCALE GENOMIC DNA]</scope>
    <source>
        <strain>NA1</strain>
    </source>
</reference>
<accession>B6YT50</accession>
<name>RNZ_THEON</name>
<keyword id="KW-0255">Endonuclease</keyword>
<keyword id="KW-0378">Hydrolase</keyword>
<keyword id="KW-0479">Metal-binding</keyword>
<keyword id="KW-0540">Nuclease</keyword>
<keyword id="KW-0819">tRNA processing</keyword>
<keyword id="KW-0862">Zinc</keyword>
<protein>
    <recommendedName>
        <fullName evidence="1">Ribonuclease Z</fullName>
        <shortName evidence="1">RNase Z</shortName>
        <ecNumber evidence="1">3.1.26.11</ecNumber>
    </recommendedName>
    <alternativeName>
        <fullName evidence="1">tRNA 3 endonuclease</fullName>
    </alternativeName>
    <alternativeName>
        <fullName evidence="1">tRNase Z</fullName>
    </alternativeName>
</protein>
<proteinExistence type="inferred from homology"/>
<evidence type="ECO:0000255" key="1">
    <source>
        <dbReference type="HAMAP-Rule" id="MF_01818"/>
    </source>
</evidence>
<feature type="chain" id="PRO_1000188003" description="Ribonuclease Z">
    <location>
        <begin position="1"/>
        <end position="311"/>
    </location>
</feature>
<feature type="active site" description="Proton acceptor" evidence="1">
    <location>
        <position position="65"/>
    </location>
</feature>
<feature type="binding site" evidence="1">
    <location>
        <position position="61"/>
    </location>
    <ligand>
        <name>Zn(2+)</name>
        <dbReference type="ChEBI" id="CHEBI:29105"/>
        <label>1</label>
        <note>catalytic</note>
    </ligand>
</feature>
<feature type="binding site" evidence="1">
    <location>
        <position position="63"/>
    </location>
    <ligand>
        <name>Zn(2+)</name>
        <dbReference type="ChEBI" id="CHEBI:29105"/>
        <label>1</label>
        <note>catalytic</note>
    </ligand>
</feature>
<feature type="binding site" evidence="1">
    <location>
        <position position="65"/>
    </location>
    <ligand>
        <name>Zn(2+)</name>
        <dbReference type="ChEBI" id="CHEBI:29105"/>
        <label>2</label>
        <note>catalytic</note>
    </ligand>
</feature>
<feature type="binding site" evidence="1">
    <location>
        <position position="66"/>
    </location>
    <ligand>
        <name>Zn(2+)</name>
        <dbReference type="ChEBI" id="CHEBI:29105"/>
        <label>2</label>
        <note>catalytic</note>
    </ligand>
</feature>
<feature type="binding site" evidence="1">
    <location>
        <position position="137"/>
    </location>
    <ligand>
        <name>Zn(2+)</name>
        <dbReference type="ChEBI" id="CHEBI:29105"/>
        <label>1</label>
        <note>catalytic</note>
    </ligand>
</feature>
<feature type="binding site" evidence="1">
    <location>
        <position position="207"/>
    </location>
    <ligand>
        <name>Zn(2+)</name>
        <dbReference type="ChEBI" id="CHEBI:29105"/>
        <label>1</label>
        <note>catalytic</note>
    </ligand>
</feature>
<feature type="binding site" evidence="1">
    <location>
        <position position="207"/>
    </location>
    <ligand>
        <name>Zn(2+)</name>
        <dbReference type="ChEBI" id="CHEBI:29105"/>
        <label>2</label>
        <note>catalytic</note>
    </ligand>
</feature>
<feature type="binding site" evidence="1">
    <location>
        <position position="263"/>
    </location>
    <ligand>
        <name>Zn(2+)</name>
        <dbReference type="ChEBI" id="CHEBI:29105"/>
        <label>2</label>
        <note>catalytic</note>
    </ligand>
</feature>
<gene>
    <name evidence="1" type="primary">rnz</name>
    <name type="ordered locus">TON_0252</name>
</gene>
<comment type="function">
    <text evidence="1">Zinc phosphodiesterase, which displays some tRNA 3'-processing endonuclease activity. Probably involved in tRNA maturation, by removing a 3'-trailer from precursor tRNA.</text>
</comment>
<comment type="catalytic activity">
    <reaction evidence="1">
        <text>Endonucleolytic cleavage of RNA, removing extra 3' nucleotides from tRNA precursor, generating 3' termini of tRNAs. A 3'-hydroxy group is left at the tRNA terminus and a 5'-phosphoryl group is left at the trailer molecule.</text>
        <dbReference type="EC" id="3.1.26.11"/>
    </reaction>
</comment>
<comment type="cofactor">
    <cofactor evidence="1">
        <name>Zn(2+)</name>
        <dbReference type="ChEBI" id="CHEBI:29105"/>
    </cofactor>
    <text evidence="1">Binds 2 Zn(2+) ions.</text>
</comment>
<comment type="subunit">
    <text evidence="1">Homodimer.</text>
</comment>
<comment type="similarity">
    <text evidence="1">Belongs to the RNase Z family.</text>
</comment>
<organism>
    <name type="scientific">Thermococcus onnurineus (strain NA1)</name>
    <dbReference type="NCBI Taxonomy" id="523850"/>
    <lineage>
        <taxon>Archaea</taxon>
        <taxon>Methanobacteriati</taxon>
        <taxon>Methanobacteriota</taxon>
        <taxon>Thermococci</taxon>
        <taxon>Thermococcales</taxon>
        <taxon>Thermococcaceae</taxon>
        <taxon>Thermococcus</taxon>
    </lineage>
</organism>